<evidence type="ECO:0000255" key="1">
    <source>
        <dbReference type="HAMAP-Rule" id="MF_00223"/>
    </source>
</evidence>
<protein>
    <recommendedName>
        <fullName evidence="1">GTP cyclohydrolase 1</fullName>
        <ecNumber evidence="1">3.5.4.16</ecNumber>
    </recommendedName>
    <alternativeName>
        <fullName evidence="1">GTP cyclohydrolase I</fullName>
        <shortName evidence="1">GTP-CH-I</shortName>
    </alternativeName>
</protein>
<feature type="chain" id="PRO_1000100195" description="GTP cyclohydrolase 1">
    <location>
        <begin position="1"/>
        <end position="222"/>
    </location>
</feature>
<feature type="binding site" evidence="1">
    <location>
        <position position="111"/>
    </location>
    <ligand>
        <name>Zn(2+)</name>
        <dbReference type="ChEBI" id="CHEBI:29105"/>
    </ligand>
</feature>
<feature type="binding site" evidence="1">
    <location>
        <position position="114"/>
    </location>
    <ligand>
        <name>Zn(2+)</name>
        <dbReference type="ChEBI" id="CHEBI:29105"/>
    </ligand>
</feature>
<feature type="binding site" evidence="1">
    <location>
        <position position="182"/>
    </location>
    <ligand>
        <name>Zn(2+)</name>
        <dbReference type="ChEBI" id="CHEBI:29105"/>
    </ligand>
</feature>
<comment type="catalytic activity">
    <reaction evidence="1">
        <text>GTP + H2O = 7,8-dihydroneopterin 3'-triphosphate + formate + H(+)</text>
        <dbReference type="Rhea" id="RHEA:17473"/>
        <dbReference type="ChEBI" id="CHEBI:15377"/>
        <dbReference type="ChEBI" id="CHEBI:15378"/>
        <dbReference type="ChEBI" id="CHEBI:15740"/>
        <dbReference type="ChEBI" id="CHEBI:37565"/>
        <dbReference type="ChEBI" id="CHEBI:58462"/>
        <dbReference type="EC" id="3.5.4.16"/>
    </reaction>
</comment>
<comment type="pathway">
    <text evidence="1">Cofactor biosynthesis; 7,8-dihydroneopterin triphosphate biosynthesis; 7,8-dihydroneopterin triphosphate from GTP: step 1/1.</text>
</comment>
<comment type="subunit">
    <text evidence="1">Homomer.</text>
</comment>
<comment type="similarity">
    <text evidence="1">Belongs to the GTP cyclohydrolase I family.</text>
</comment>
<name>GCH1_SALNS</name>
<accession>B4SY26</accession>
<dbReference type="EC" id="3.5.4.16" evidence="1"/>
<dbReference type="EMBL" id="CP001113">
    <property type="protein sequence ID" value="ACF64750.1"/>
    <property type="molecule type" value="Genomic_DNA"/>
</dbReference>
<dbReference type="RefSeq" id="WP_001139611.1">
    <property type="nucleotide sequence ID" value="NZ_CCMR01000002.1"/>
</dbReference>
<dbReference type="SMR" id="B4SY26"/>
<dbReference type="KEGG" id="see:SNSL254_A2384"/>
<dbReference type="HOGENOM" id="CLU_049768_3_2_6"/>
<dbReference type="UniPathway" id="UPA00848">
    <property type="reaction ID" value="UER00151"/>
</dbReference>
<dbReference type="Proteomes" id="UP000008824">
    <property type="component" value="Chromosome"/>
</dbReference>
<dbReference type="GO" id="GO:0005737">
    <property type="term" value="C:cytoplasm"/>
    <property type="evidence" value="ECO:0007669"/>
    <property type="project" value="TreeGrafter"/>
</dbReference>
<dbReference type="GO" id="GO:0005525">
    <property type="term" value="F:GTP binding"/>
    <property type="evidence" value="ECO:0007669"/>
    <property type="project" value="UniProtKB-KW"/>
</dbReference>
<dbReference type="GO" id="GO:0003934">
    <property type="term" value="F:GTP cyclohydrolase I activity"/>
    <property type="evidence" value="ECO:0007669"/>
    <property type="project" value="UniProtKB-UniRule"/>
</dbReference>
<dbReference type="GO" id="GO:0008270">
    <property type="term" value="F:zinc ion binding"/>
    <property type="evidence" value="ECO:0007669"/>
    <property type="project" value="UniProtKB-UniRule"/>
</dbReference>
<dbReference type="GO" id="GO:0006730">
    <property type="term" value="P:one-carbon metabolic process"/>
    <property type="evidence" value="ECO:0007669"/>
    <property type="project" value="UniProtKB-UniRule"/>
</dbReference>
<dbReference type="GO" id="GO:0006729">
    <property type="term" value="P:tetrahydrobiopterin biosynthetic process"/>
    <property type="evidence" value="ECO:0007669"/>
    <property type="project" value="TreeGrafter"/>
</dbReference>
<dbReference type="GO" id="GO:0046654">
    <property type="term" value="P:tetrahydrofolate biosynthetic process"/>
    <property type="evidence" value="ECO:0007669"/>
    <property type="project" value="UniProtKB-UniRule"/>
</dbReference>
<dbReference type="CDD" id="cd00642">
    <property type="entry name" value="GTP_cyclohydro1"/>
    <property type="match status" value="1"/>
</dbReference>
<dbReference type="FunFam" id="1.10.286.10:FF:000002">
    <property type="entry name" value="GTP cyclohydrolase 1"/>
    <property type="match status" value="1"/>
</dbReference>
<dbReference type="FunFam" id="3.30.1130.10:FF:000001">
    <property type="entry name" value="GTP cyclohydrolase 1"/>
    <property type="match status" value="1"/>
</dbReference>
<dbReference type="Gene3D" id="1.10.286.10">
    <property type="match status" value="1"/>
</dbReference>
<dbReference type="Gene3D" id="3.30.1130.10">
    <property type="match status" value="1"/>
</dbReference>
<dbReference type="HAMAP" id="MF_00223">
    <property type="entry name" value="FolE"/>
    <property type="match status" value="1"/>
</dbReference>
<dbReference type="InterPro" id="IPR043133">
    <property type="entry name" value="GTP-CH-I_C/QueF"/>
</dbReference>
<dbReference type="InterPro" id="IPR043134">
    <property type="entry name" value="GTP-CH-I_N"/>
</dbReference>
<dbReference type="InterPro" id="IPR001474">
    <property type="entry name" value="GTP_CycHdrlase_I"/>
</dbReference>
<dbReference type="InterPro" id="IPR018234">
    <property type="entry name" value="GTP_CycHdrlase_I_CS"/>
</dbReference>
<dbReference type="InterPro" id="IPR020602">
    <property type="entry name" value="GTP_CycHdrlase_I_dom"/>
</dbReference>
<dbReference type="NCBIfam" id="TIGR00063">
    <property type="entry name" value="folE"/>
    <property type="match status" value="1"/>
</dbReference>
<dbReference type="NCBIfam" id="NF006824">
    <property type="entry name" value="PRK09347.1-1"/>
    <property type="match status" value="1"/>
</dbReference>
<dbReference type="NCBIfam" id="NF006825">
    <property type="entry name" value="PRK09347.1-2"/>
    <property type="match status" value="1"/>
</dbReference>
<dbReference type="NCBIfam" id="NF006826">
    <property type="entry name" value="PRK09347.1-3"/>
    <property type="match status" value="1"/>
</dbReference>
<dbReference type="PANTHER" id="PTHR11109:SF7">
    <property type="entry name" value="GTP CYCLOHYDROLASE 1"/>
    <property type="match status" value="1"/>
</dbReference>
<dbReference type="PANTHER" id="PTHR11109">
    <property type="entry name" value="GTP CYCLOHYDROLASE I"/>
    <property type="match status" value="1"/>
</dbReference>
<dbReference type="Pfam" id="PF01227">
    <property type="entry name" value="GTP_cyclohydroI"/>
    <property type="match status" value="1"/>
</dbReference>
<dbReference type="SUPFAM" id="SSF55620">
    <property type="entry name" value="Tetrahydrobiopterin biosynthesis enzymes-like"/>
    <property type="match status" value="1"/>
</dbReference>
<dbReference type="PROSITE" id="PS00859">
    <property type="entry name" value="GTP_CYCLOHYDROL_1_1"/>
    <property type="match status" value="1"/>
</dbReference>
<dbReference type="PROSITE" id="PS00860">
    <property type="entry name" value="GTP_CYCLOHYDROL_1_2"/>
    <property type="match status" value="1"/>
</dbReference>
<proteinExistence type="inferred from homology"/>
<organism>
    <name type="scientific">Salmonella newport (strain SL254)</name>
    <dbReference type="NCBI Taxonomy" id="423368"/>
    <lineage>
        <taxon>Bacteria</taxon>
        <taxon>Pseudomonadati</taxon>
        <taxon>Pseudomonadota</taxon>
        <taxon>Gammaproteobacteria</taxon>
        <taxon>Enterobacterales</taxon>
        <taxon>Enterobacteriaceae</taxon>
        <taxon>Salmonella</taxon>
    </lineage>
</organism>
<sequence>MPSLSKEAALVHDALVARGLETPLRPPMDELDNETRKSLIAGHMTEIMQLLNLDLSDDSLMETPHRIAKMYVDEIFAGLDYANFPKITLIENKMKVDEMVTVRDITLTSTCEHHFVTIDGKATVAYIPKDSVIGLSKINRIVQFFAQRPQVQERLTQQILTALQTLLGTNNVAVSIDAVHYCVKARGIRDATSATTTTSLGGLFKSSQNTRQEFLRAVRHHP</sequence>
<gene>
    <name evidence="1" type="primary">folE</name>
    <name type="ordered locus">SNSL254_A2384</name>
</gene>
<reference key="1">
    <citation type="journal article" date="2011" name="J. Bacteriol.">
        <title>Comparative genomics of 28 Salmonella enterica isolates: evidence for CRISPR-mediated adaptive sublineage evolution.</title>
        <authorList>
            <person name="Fricke W.F."/>
            <person name="Mammel M.K."/>
            <person name="McDermott P.F."/>
            <person name="Tartera C."/>
            <person name="White D.G."/>
            <person name="Leclerc J.E."/>
            <person name="Ravel J."/>
            <person name="Cebula T.A."/>
        </authorList>
    </citation>
    <scope>NUCLEOTIDE SEQUENCE [LARGE SCALE GENOMIC DNA]</scope>
    <source>
        <strain>SL254</strain>
    </source>
</reference>
<keyword id="KW-0342">GTP-binding</keyword>
<keyword id="KW-0378">Hydrolase</keyword>
<keyword id="KW-0479">Metal-binding</keyword>
<keyword id="KW-0547">Nucleotide-binding</keyword>
<keyword id="KW-0554">One-carbon metabolism</keyword>
<keyword id="KW-0862">Zinc</keyword>